<comment type="function">
    <text evidence="1">Component of the cytochrome c oxidase, the last enzyme in the mitochondrial electron transport chain which drives oxidative phosphorylation. The respiratory chain contains 3 multisubunit complexes succinate dehydrogenase (complex II, CII), ubiquinol-cytochrome c oxidoreductase (cytochrome b-c1 complex, complex III, CIII) and cytochrome c oxidase (complex IV, CIV), that cooperate to transfer electrons derived from NADH and succinate to molecular oxygen, creating an electrochemical gradient over the inner membrane that drives transmembrane transport and the ATP synthase. Cytochrome c oxidase is the component of the respiratory chain that catalyzes the reduction of oxygen to water. Electrons originating from reduced cytochrome c in the intermembrane space (IMS) are transferred via the dinuclear copper A center (CU(A)) of subunit 2 and heme A of subunit 1 to the active site in subunit 1, a binuclear center (BNC) formed by heme A3 and copper B (CU(B)). The BNC reduces molecular oxygen to 2 water molecules using 4 electrons from cytochrome c in the IMS and 4 protons from the mitochondrial matrix.</text>
</comment>
<comment type="pathway">
    <text evidence="1">Energy metabolism; oxidative phosphorylation.</text>
</comment>
<comment type="subunit">
    <text evidence="1">Component of the cytochrome c oxidase (complex IV, CIV), a multisubunit enzyme composed of 14 subunits. The complex is composed of a catalytic core of 3 subunits MT-CO1, MT-CO2 and MT-CO3, encoded in the mitochondrial DNA, and 11 supernumerary subunits COX4I, COX5A, COX5B, COX6A, COX6B, COX6C, COX7A, COX7B, COX7C, COX8 and NDUFA4, which are encoded in the nuclear genome. The complex exists as a monomer or a dimer and forms supercomplexes (SCs) in the inner mitochondrial membrane with NADH-ubiquinone oxidoreductase (complex I, CI) and ubiquinol-cytochrome c oxidoreductase (cytochrome b-c1 complex, complex III, CIII), resulting in different assemblies (supercomplex SCI(1)III(2)IV(1) and megacomplex MCI(2)III(2)IV(2)).</text>
</comment>
<comment type="subcellular location">
    <subcellularLocation>
        <location evidence="1">Mitochondrion inner membrane</location>
        <topology evidence="1">Single-pass membrane protein</topology>
    </subcellularLocation>
</comment>
<comment type="similarity">
    <text evidence="2">Belongs to the cytochrome c oxidase VIII family.</text>
</comment>
<dbReference type="EMBL" id="AY254827">
    <property type="protein sequence ID" value="AAP32258.1"/>
    <property type="molecule type" value="mRNA"/>
</dbReference>
<dbReference type="SMR" id="Q863F9"/>
<dbReference type="UniPathway" id="UPA00705"/>
<dbReference type="Proteomes" id="UP000189704">
    <property type="component" value="Unplaced"/>
</dbReference>
<dbReference type="GO" id="GO:0005743">
    <property type="term" value="C:mitochondrial inner membrane"/>
    <property type="evidence" value="ECO:0007669"/>
    <property type="project" value="UniProtKB-SubCell"/>
</dbReference>
<dbReference type="GO" id="GO:0045277">
    <property type="term" value="C:respiratory chain complex IV"/>
    <property type="evidence" value="ECO:0007669"/>
    <property type="project" value="InterPro"/>
</dbReference>
<dbReference type="GO" id="GO:0006123">
    <property type="term" value="P:mitochondrial electron transport, cytochrome c to oxygen"/>
    <property type="evidence" value="ECO:0007669"/>
    <property type="project" value="InterPro"/>
</dbReference>
<dbReference type="CDD" id="cd00930">
    <property type="entry name" value="Cyt_c_Oxidase_VIII"/>
    <property type="match status" value="1"/>
</dbReference>
<dbReference type="FunFam" id="4.10.81.10:FF:000001">
    <property type="entry name" value="Cytochrome c oxidase subunit 8B, mitochondrial"/>
    <property type="match status" value="1"/>
</dbReference>
<dbReference type="Gene3D" id="4.10.81.10">
    <property type="entry name" value="Cytochrome c oxidase, subunit 8"/>
    <property type="match status" value="1"/>
</dbReference>
<dbReference type="InterPro" id="IPR003205">
    <property type="entry name" value="Cyt_c_oxidase_su8"/>
</dbReference>
<dbReference type="InterPro" id="IPR036548">
    <property type="entry name" value="Cyt_c_oxidase_su8_sf"/>
</dbReference>
<dbReference type="PANTHER" id="PTHR16717">
    <property type="entry name" value="CYTOCHROME C OXIDASE POLYPEPTIDE VIII"/>
    <property type="match status" value="1"/>
</dbReference>
<dbReference type="PANTHER" id="PTHR16717:SF4">
    <property type="entry name" value="CYTOCHROME C OXIDASE SUBUNIT 8B, MITOCHONDRIAL"/>
    <property type="match status" value="1"/>
</dbReference>
<dbReference type="Pfam" id="PF02285">
    <property type="entry name" value="COX8"/>
    <property type="match status" value="1"/>
</dbReference>
<dbReference type="SUPFAM" id="SSF81431">
    <property type="entry name" value="Mitochondrial cytochrome c oxidase subunit VIIIb (aka IX)"/>
    <property type="match status" value="1"/>
</dbReference>
<sequence length="70" mass="7619">MSRLAPPLRLLQAPLKCWAVPKAHVSAKPARTPTSPMEQAVGLSVMFVSFLVPSGWVLSHLESYKKSSTT</sequence>
<protein>
    <recommendedName>
        <fullName>Cytochrome c oxidase subunit 8B, mitochondrial</fullName>
    </recommendedName>
    <alternativeName>
        <fullName>Cytochrome c oxidase polypeptide VIII-heart</fullName>
    </alternativeName>
    <alternativeName>
        <fullName>Cytochrome c oxidase subunit 8-1</fullName>
    </alternativeName>
    <alternativeName>
        <fullName>Cytochrome c oxidase subunit 8H</fullName>
    </alternativeName>
</protein>
<organism>
    <name type="scientific">Carlito syrichta</name>
    <name type="common">Philippine tarsier</name>
    <name type="synonym">Tarsius syrichta</name>
    <dbReference type="NCBI Taxonomy" id="1868482"/>
    <lineage>
        <taxon>Eukaryota</taxon>
        <taxon>Metazoa</taxon>
        <taxon>Chordata</taxon>
        <taxon>Craniata</taxon>
        <taxon>Vertebrata</taxon>
        <taxon>Euteleostomi</taxon>
        <taxon>Mammalia</taxon>
        <taxon>Eutheria</taxon>
        <taxon>Euarchontoglires</taxon>
        <taxon>Primates</taxon>
        <taxon>Haplorrhini</taxon>
        <taxon>Tarsiiformes</taxon>
        <taxon>Tarsiidae</taxon>
        <taxon>Carlito</taxon>
    </lineage>
</organism>
<evidence type="ECO:0000250" key="1">
    <source>
        <dbReference type="UniProtKB" id="P10175"/>
    </source>
</evidence>
<evidence type="ECO:0000305" key="2"/>
<name>COX8B_CARSF</name>
<gene>
    <name type="primary">COX8B</name>
    <name type="synonym">COX8H</name>
</gene>
<accession>Q863F9</accession>
<proteinExistence type="inferred from homology"/>
<feature type="transit peptide" description="Mitochondrion" evidence="1">
    <location>
        <begin position="1"/>
        <end position="24"/>
    </location>
</feature>
<feature type="chain" id="PRO_0000006180" description="Cytochrome c oxidase subunit 8B, mitochondrial">
    <location>
        <begin position="25"/>
        <end position="70"/>
    </location>
</feature>
<feature type="topological domain" description="Mitochondrial matrix" evidence="1">
    <location>
        <begin position="25"/>
        <end position="35"/>
    </location>
</feature>
<feature type="transmembrane region" description="Helical" evidence="1">
    <location>
        <begin position="36"/>
        <end position="59"/>
    </location>
</feature>
<feature type="topological domain" description="Mitochondrial intermembrane" evidence="1">
    <location>
        <begin position="60"/>
        <end position="70"/>
    </location>
</feature>
<keyword id="KW-0472">Membrane</keyword>
<keyword id="KW-0496">Mitochondrion</keyword>
<keyword id="KW-0999">Mitochondrion inner membrane</keyword>
<keyword id="KW-1185">Reference proteome</keyword>
<keyword id="KW-0809">Transit peptide</keyword>
<keyword id="KW-0812">Transmembrane</keyword>
<keyword id="KW-1133">Transmembrane helix</keyword>
<reference key="1">
    <citation type="journal article" date="2003" name="Proc. Natl. Acad. Sci. U.S.A.">
        <title>Adaptive evolution of cytochrome c oxidase subunit VIII in anthropoid primates.</title>
        <authorList>
            <person name="Goldberg A."/>
            <person name="Wildman D.E."/>
            <person name="Schmidt T.R."/>
            <person name="Huttemann M."/>
            <person name="Goodman M."/>
            <person name="Weiss M.L."/>
            <person name="Grossman L.I."/>
        </authorList>
    </citation>
    <scope>NUCLEOTIDE SEQUENCE [MRNA]</scope>
</reference>